<comment type="function">
    <text evidence="3">Odorant receptor.</text>
</comment>
<comment type="subcellular location">
    <subcellularLocation>
        <location>Cell membrane</location>
        <topology>Multi-pass membrane protein</topology>
    </subcellularLocation>
</comment>
<comment type="similarity">
    <text evidence="2">Belongs to the G-protein coupled receptor 1 family.</text>
</comment>
<comment type="online information" name="Human Olfactory Receptor Data Exploratorium (HORDE)">
    <link uri="http://genome.weizmann.ac.il/horde/card/index/symbol:OR4K5"/>
</comment>
<accession>Q8NGD3</accession>
<accession>Q6IFA7</accession>
<evidence type="ECO:0000255" key="1"/>
<evidence type="ECO:0000255" key="2">
    <source>
        <dbReference type="PROSITE-ProRule" id="PRU00521"/>
    </source>
</evidence>
<evidence type="ECO:0000305" key="3"/>
<dbReference type="EMBL" id="AB065882">
    <property type="protein sequence ID" value="BAC06100.1"/>
    <property type="molecule type" value="Genomic_DNA"/>
</dbReference>
<dbReference type="EMBL" id="BK004355">
    <property type="protein sequence ID" value="DAA04753.1"/>
    <property type="molecule type" value="Genomic_DNA"/>
</dbReference>
<dbReference type="CCDS" id="CCDS32024.1"/>
<dbReference type="RefSeq" id="NP_001005483.1">
    <property type="nucleotide sequence ID" value="NM_001005483.1"/>
</dbReference>
<dbReference type="SMR" id="Q8NGD3"/>
<dbReference type="FunCoup" id="Q8NGD3">
    <property type="interactions" value="416"/>
</dbReference>
<dbReference type="STRING" id="9606.ENSP00000319511"/>
<dbReference type="GlyCosmos" id="Q8NGD3">
    <property type="glycosylation" value="1 site, No reported glycans"/>
</dbReference>
<dbReference type="GlyGen" id="Q8NGD3">
    <property type="glycosylation" value="1 site"/>
</dbReference>
<dbReference type="BioMuta" id="OR4K5"/>
<dbReference type="DMDM" id="38372673"/>
<dbReference type="MassIVE" id="Q8NGD3"/>
<dbReference type="PaxDb" id="9606-ENSP00000319511"/>
<dbReference type="Antibodypedia" id="58520">
    <property type="antibodies" value="59 antibodies from 15 providers"/>
</dbReference>
<dbReference type="DNASU" id="79317"/>
<dbReference type="Ensembl" id="ENST00000315915.5">
    <property type="protein sequence ID" value="ENSP00000319511.3"/>
    <property type="gene ID" value="ENSG00000176281.5"/>
</dbReference>
<dbReference type="Ensembl" id="ENST00000708873.1">
    <property type="protein sequence ID" value="ENSP00000517391.1"/>
    <property type="gene ID" value="ENSG00000291822.1"/>
</dbReference>
<dbReference type="GeneID" id="79317"/>
<dbReference type="KEGG" id="hsa:79317"/>
<dbReference type="MANE-Select" id="ENST00000315915.5">
    <property type="protein sequence ID" value="ENSP00000319511.3"/>
    <property type="RefSeq nucleotide sequence ID" value="NM_001005483.1"/>
    <property type="RefSeq protein sequence ID" value="NP_001005483.1"/>
</dbReference>
<dbReference type="UCSC" id="uc010tkw.3">
    <property type="organism name" value="human"/>
</dbReference>
<dbReference type="AGR" id="HGNC:14745"/>
<dbReference type="CTD" id="79317"/>
<dbReference type="GeneCards" id="OR4K5"/>
<dbReference type="HGNC" id="HGNC:14745">
    <property type="gene designation" value="OR4K5"/>
</dbReference>
<dbReference type="HPA" id="ENSG00000176281">
    <property type="expression patterns" value="Not detected"/>
</dbReference>
<dbReference type="neXtProt" id="NX_Q8NGD3"/>
<dbReference type="OpenTargets" id="ENSG00000176281"/>
<dbReference type="PharmGKB" id="PA32320"/>
<dbReference type="VEuPathDB" id="HostDB:ENSG00000176281"/>
<dbReference type="eggNOG" id="ENOG502T9M0">
    <property type="taxonomic scope" value="Eukaryota"/>
</dbReference>
<dbReference type="GeneTree" id="ENSGT00940000163286"/>
<dbReference type="HOGENOM" id="CLU_012526_5_5_1"/>
<dbReference type="InParanoid" id="Q8NGD3"/>
<dbReference type="OMA" id="IVTHYLR"/>
<dbReference type="OrthoDB" id="6147321at2759"/>
<dbReference type="PAN-GO" id="Q8NGD3">
    <property type="GO annotations" value="2 GO annotations based on evolutionary models"/>
</dbReference>
<dbReference type="PhylomeDB" id="Q8NGD3"/>
<dbReference type="TreeFam" id="TF337251"/>
<dbReference type="PathwayCommons" id="Q8NGD3"/>
<dbReference type="Reactome" id="R-HSA-9752946">
    <property type="pathway name" value="Expression and translocation of olfactory receptors"/>
</dbReference>
<dbReference type="BioGRID-ORCS" id="79317">
    <property type="hits" value="5 hits in 736 CRISPR screens"/>
</dbReference>
<dbReference type="GeneWiki" id="OR4K5"/>
<dbReference type="GenomeRNAi" id="79317"/>
<dbReference type="Pharos" id="Q8NGD3">
    <property type="development level" value="Tdark"/>
</dbReference>
<dbReference type="PRO" id="PR:Q8NGD3"/>
<dbReference type="Proteomes" id="UP000005640">
    <property type="component" value="Chromosome 14"/>
</dbReference>
<dbReference type="RNAct" id="Q8NGD3">
    <property type="molecule type" value="protein"/>
</dbReference>
<dbReference type="ExpressionAtlas" id="Q8NGD3">
    <property type="expression patterns" value="baseline and differential"/>
</dbReference>
<dbReference type="GO" id="GO:0005886">
    <property type="term" value="C:plasma membrane"/>
    <property type="evidence" value="ECO:0007669"/>
    <property type="project" value="UniProtKB-SubCell"/>
</dbReference>
<dbReference type="GO" id="GO:0004930">
    <property type="term" value="F:G protein-coupled receptor activity"/>
    <property type="evidence" value="ECO:0007669"/>
    <property type="project" value="UniProtKB-KW"/>
</dbReference>
<dbReference type="GO" id="GO:0004984">
    <property type="term" value="F:olfactory receptor activity"/>
    <property type="evidence" value="ECO:0000318"/>
    <property type="project" value="GO_Central"/>
</dbReference>
<dbReference type="CDD" id="cd15226">
    <property type="entry name" value="7tmA_OR4-like"/>
    <property type="match status" value="1"/>
</dbReference>
<dbReference type="FunFam" id="1.10.1220.70:FF:000001">
    <property type="entry name" value="Olfactory receptor"/>
    <property type="match status" value="1"/>
</dbReference>
<dbReference type="FunFam" id="1.20.1070.10:FF:000012">
    <property type="entry name" value="Olfactory receptor"/>
    <property type="match status" value="1"/>
</dbReference>
<dbReference type="Gene3D" id="1.20.1070.10">
    <property type="entry name" value="Rhodopsin 7-helix transmembrane proteins"/>
    <property type="match status" value="1"/>
</dbReference>
<dbReference type="InterPro" id="IPR000276">
    <property type="entry name" value="GPCR_Rhodpsn"/>
</dbReference>
<dbReference type="InterPro" id="IPR017452">
    <property type="entry name" value="GPCR_Rhodpsn_7TM"/>
</dbReference>
<dbReference type="InterPro" id="IPR000725">
    <property type="entry name" value="Olfact_rcpt"/>
</dbReference>
<dbReference type="InterPro" id="IPR050427">
    <property type="entry name" value="Olfactory_Receptors"/>
</dbReference>
<dbReference type="PANTHER" id="PTHR48002">
    <property type="entry name" value="OLFACTORY RECEPTOR"/>
    <property type="match status" value="1"/>
</dbReference>
<dbReference type="Pfam" id="PF13853">
    <property type="entry name" value="7tm_4"/>
    <property type="match status" value="1"/>
</dbReference>
<dbReference type="PRINTS" id="PR00237">
    <property type="entry name" value="GPCRRHODOPSN"/>
</dbReference>
<dbReference type="PRINTS" id="PR00245">
    <property type="entry name" value="OLFACTORYR"/>
</dbReference>
<dbReference type="SUPFAM" id="SSF81321">
    <property type="entry name" value="Family A G protein-coupled receptor-like"/>
    <property type="match status" value="1"/>
</dbReference>
<dbReference type="PROSITE" id="PS00237">
    <property type="entry name" value="G_PROTEIN_RECEP_F1_1"/>
    <property type="match status" value="1"/>
</dbReference>
<dbReference type="PROSITE" id="PS50262">
    <property type="entry name" value="G_PROTEIN_RECEP_F1_2"/>
    <property type="match status" value="1"/>
</dbReference>
<name>OR4K5_HUMAN</name>
<keyword id="KW-1003">Cell membrane</keyword>
<keyword id="KW-1015">Disulfide bond</keyword>
<keyword id="KW-0297">G-protein coupled receptor</keyword>
<keyword id="KW-0325">Glycoprotein</keyword>
<keyword id="KW-0472">Membrane</keyword>
<keyword id="KW-0552">Olfaction</keyword>
<keyword id="KW-0675">Receptor</keyword>
<keyword id="KW-1185">Reference proteome</keyword>
<keyword id="KW-0716">Sensory transduction</keyword>
<keyword id="KW-0807">Transducer</keyword>
<keyword id="KW-0812">Transmembrane</keyword>
<keyword id="KW-1133">Transmembrane helix</keyword>
<proteinExistence type="inferred from homology"/>
<feature type="chain" id="PRO_0000150555" description="Olfactory receptor 4K5">
    <location>
        <begin position="1"/>
        <end position="323"/>
    </location>
</feature>
<feature type="topological domain" description="Extracellular" evidence="1">
    <location>
        <begin position="1"/>
        <end position="25"/>
    </location>
</feature>
<feature type="transmembrane region" description="Helical; Name=1" evidence="1">
    <location>
        <begin position="26"/>
        <end position="49"/>
    </location>
</feature>
<feature type="topological domain" description="Cytoplasmic" evidence="1">
    <location>
        <begin position="50"/>
        <end position="57"/>
    </location>
</feature>
<feature type="transmembrane region" description="Helical; Name=2" evidence="1">
    <location>
        <begin position="58"/>
        <end position="79"/>
    </location>
</feature>
<feature type="topological domain" description="Extracellular" evidence="1">
    <location>
        <begin position="80"/>
        <end position="100"/>
    </location>
</feature>
<feature type="transmembrane region" description="Helical; Name=3" evidence="1">
    <location>
        <begin position="101"/>
        <end position="120"/>
    </location>
</feature>
<feature type="topological domain" description="Cytoplasmic" evidence="1">
    <location>
        <begin position="121"/>
        <end position="139"/>
    </location>
</feature>
<feature type="transmembrane region" description="Helical; Name=4" evidence="1">
    <location>
        <begin position="140"/>
        <end position="158"/>
    </location>
</feature>
<feature type="topological domain" description="Extracellular" evidence="1">
    <location>
        <begin position="159"/>
        <end position="195"/>
    </location>
</feature>
<feature type="transmembrane region" description="Helical; Name=5" evidence="1">
    <location>
        <begin position="196"/>
        <end position="219"/>
    </location>
</feature>
<feature type="topological domain" description="Cytoplasmic" evidence="1">
    <location>
        <begin position="220"/>
        <end position="235"/>
    </location>
</feature>
<feature type="transmembrane region" description="Helical; Name=6" evidence="1">
    <location>
        <begin position="236"/>
        <end position="258"/>
    </location>
</feature>
<feature type="topological domain" description="Extracellular" evidence="1">
    <location>
        <begin position="259"/>
        <end position="269"/>
    </location>
</feature>
<feature type="transmembrane region" description="Helical; Name=7" evidence="1">
    <location>
        <begin position="270"/>
        <end position="289"/>
    </location>
</feature>
<feature type="topological domain" description="Cytoplasmic" evidence="1">
    <location>
        <begin position="290"/>
        <end position="323"/>
    </location>
</feature>
<feature type="glycosylation site" description="N-linked (GlcNAc...) asparagine" evidence="1">
    <location>
        <position position="5"/>
    </location>
</feature>
<feature type="disulfide bond" evidence="2">
    <location>
        <begin position="97"/>
        <end position="189"/>
    </location>
</feature>
<feature type="sequence variant" id="VAR_034200" description="In dbSNP:rs17242341.">
    <original>R</original>
    <variation>K</variation>
    <location>
        <position position="319"/>
    </location>
</feature>
<protein>
    <recommendedName>
        <fullName>Olfactory receptor 4K5</fullName>
    </recommendedName>
    <alternativeName>
        <fullName>Olfactory receptor OR14-16</fullName>
    </alternativeName>
</protein>
<organism>
    <name type="scientific">Homo sapiens</name>
    <name type="common">Human</name>
    <dbReference type="NCBI Taxonomy" id="9606"/>
    <lineage>
        <taxon>Eukaryota</taxon>
        <taxon>Metazoa</taxon>
        <taxon>Chordata</taxon>
        <taxon>Craniata</taxon>
        <taxon>Vertebrata</taxon>
        <taxon>Euteleostomi</taxon>
        <taxon>Mammalia</taxon>
        <taxon>Eutheria</taxon>
        <taxon>Euarchontoglires</taxon>
        <taxon>Primates</taxon>
        <taxon>Haplorrhini</taxon>
        <taxon>Catarrhini</taxon>
        <taxon>Hominidae</taxon>
        <taxon>Homo</taxon>
    </lineage>
</organism>
<sequence>MDKSNSSVVSEFVLLGLCSSQKLQLFYFCFFSVLYTVIVLGNLLIILTVTSDTSLHSPMYFLLGNLSFVDICQASFATPKMIADFLSAHETISFSGCIAQIFFIHLFTGGEMVLLVSMAYDRYVAICKPLYYVVIMSRRTCTVLVMISWAVSLVHTLSQLSFTVNLPFCGPNVVDSFFCDLPRVTKLACLDSYIIEILIVVNSGILSLSTFSLLVSSYIIILVTVWLKSSAAMAKAFSTLASHIAVVILFFGPCIFIYVWPFTISPLDKFLAIFYTVFTPVLNPIIYTLRNRDMKAAVRKIVNHYLRPRRISEMSLVVRTSFH</sequence>
<reference key="1">
    <citation type="submission" date="2001-07" db="EMBL/GenBank/DDBJ databases">
        <title>Genome-wide discovery and analysis of human seven transmembrane helix receptor genes.</title>
        <authorList>
            <person name="Suwa M."/>
            <person name="Sato T."/>
            <person name="Okouchi I."/>
            <person name="Arita M."/>
            <person name="Futami K."/>
            <person name="Matsumoto S."/>
            <person name="Tsutsumi S."/>
            <person name="Aburatani H."/>
            <person name="Asai K."/>
            <person name="Akiyama Y."/>
        </authorList>
    </citation>
    <scope>NUCLEOTIDE SEQUENCE [GENOMIC DNA]</scope>
</reference>
<reference key="2">
    <citation type="journal article" date="2004" name="Proc. Natl. Acad. Sci. U.S.A.">
        <title>The human olfactory receptor gene family.</title>
        <authorList>
            <person name="Malnic B."/>
            <person name="Godfrey P.A."/>
            <person name="Buck L.B."/>
        </authorList>
    </citation>
    <scope>IDENTIFICATION</scope>
</reference>
<reference key="3">
    <citation type="journal article" date="2004" name="Proc. Natl. Acad. Sci. U.S.A.">
        <authorList>
            <person name="Malnic B."/>
            <person name="Godfrey P.A."/>
            <person name="Buck L.B."/>
        </authorList>
    </citation>
    <scope>ERRATUM OF PUBMED:14983052</scope>
</reference>
<gene>
    <name type="primary">OR4K5</name>
</gene>